<proteinExistence type="evidence at protein level"/>
<name>NPY2R_HUMAN</name>
<reference key="1">
    <citation type="journal article" date="1995" name="J. Biol. Chem.">
        <title>Expression cloning and pharmacological characterization of a human hippocampal neuropeptide Y/peptide YY Y2 receptor subtype.</title>
        <authorList>
            <person name="Gerald C."/>
            <person name="Walker M.W."/>
            <person name="Vaysse P.J.-J."/>
            <person name="He C."/>
            <person name="Branchek T.A."/>
            <person name="Weinshank R.L."/>
        </authorList>
    </citation>
    <scope>NUCLEOTIDE SEQUENCE [MRNA]</scope>
    <source>
        <tissue>Hippocampus</tissue>
    </source>
</reference>
<reference key="2">
    <citation type="journal article" date="1996" name="Mol. Pharmacol.">
        <title>Expression cloning of a human brain neuropeptide Y Y2 receptor.</title>
        <authorList>
            <person name="Gehlert D.R."/>
            <person name="Beavers L.S."/>
            <person name="Johnson D."/>
            <person name="Gackenheimer S.L."/>
            <person name="Schober D.A."/>
            <person name="Gadski R.A."/>
        </authorList>
    </citation>
    <scope>NUCLEOTIDE SEQUENCE [MRNA]</scope>
    <source>
        <tissue>Brain</tissue>
    </source>
</reference>
<reference key="3">
    <citation type="journal article" date="1995" name="J. Biol. Chem.">
        <title>Cloning and functional expression of a cDNA encoding a human type 2 neuropeptide Y receptor.</title>
        <authorList>
            <person name="Rose P.M."/>
            <person name="Fernandes P."/>
            <person name="Lynch J.S."/>
            <person name="Frazier S.T."/>
            <person name="Fisher S.M."/>
            <person name="Kodukula K."/>
            <person name="Kienzle B."/>
            <person name="Seethala R."/>
        </authorList>
    </citation>
    <scope>NUCLEOTIDE SEQUENCE [MRNA]</scope>
</reference>
<reference key="4">
    <citation type="journal article" date="1996" name="Proc. Natl. Acad. Sci. U.S.A.">
        <title>Cloning and functional expression of cDNAs encoding human and rat pancreatic polypeptide receptors.</title>
        <authorList>
            <person name="Yan H."/>
            <person name="Yang J."/>
            <person name="Marasco J."/>
            <person name="Yamaguchi K."/>
            <person name="Brenner S."/>
            <person name="Collins F."/>
            <person name="Karbon W."/>
        </authorList>
    </citation>
    <scope>NUCLEOTIDE SEQUENCE [MRNA]</scope>
</reference>
<reference key="5">
    <citation type="journal article" date="1996" name="Genomics">
        <title>Characterization of the human type 2 neuropeptide Y receptor gene (NPY2R) and localization to the chromosome 4q region containing the type 1 neuropeptide Y receptor gene.</title>
        <authorList>
            <person name="Ammar D.A."/>
            <person name="Eadie D.M."/>
            <person name="Wong D.J."/>
            <person name="Ma Y.-Y."/>
            <person name="Kolakowski L.F. Jr."/>
            <person name="Yang-Feng T.L."/>
            <person name="Thompson D.A."/>
        </authorList>
    </citation>
    <scope>NUCLEOTIDE SEQUENCE [GENOMIC DNA]</scope>
</reference>
<reference key="6">
    <citation type="submission" date="1996-10" db="EMBL/GenBank/DDBJ databases">
        <title>Human neuropeptide Y Y2 receptor gene.</title>
        <authorList>
            <person name="Zastawny R.L."/>
        </authorList>
    </citation>
    <scope>NUCLEOTIDE SEQUENCE [GENOMIC DNA]</scope>
</reference>
<reference key="7">
    <citation type="submission" date="2003-01" db="EMBL/GenBank/DDBJ databases">
        <title>cDNA clones of human proteins involved in signal transduction sequenced by the Guthrie cDNA resource center (www.cdna.org).</title>
        <authorList>
            <person name="Kopatz S.A."/>
            <person name="Aronstam R.S."/>
            <person name="Sharma S.V."/>
        </authorList>
    </citation>
    <scope>NUCLEOTIDE SEQUENCE [LARGE SCALE MRNA]</scope>
</reference>
<reference key="8">
    <citation type="journal article" date="2005" name="Nature">
        <title>Generation and annotation of the DNA sequences of human chromosomes 2 and 4.</title>
        <authorList>
            <person name="Hillier L.W."/>
            <person name="Graves T.A."/>
            <person name="Fulton R.S."/>
            <person name="Fulton L.A."/>
            <person name="Pepin K.H."/>
            <person name="Minx P."/>
            <person name="Wagner-McPherson C."/>
            <person name="Layman D."/>
            <person name="Wylie K."/>
            <person name="Sekhon M."/>
            <person name="Becker M.C."/>
            <person name="Fewell G.A."/>
            <person name="Delehaunty K.D."/>
            <person name="Miner T.L."/>
            <person name="Nash W.E."/>
            <person name="Kremitzki C."/>
            <person name="Oddy L."/>
            <person name="Du H."/>
            <person name="Sun H."/>
            <person name="Bradshaw-Cordum H."/>
            <person name="Ali J."/>
            <person name="Carter J."/>
            <person name="Cordes M."/>
            <person name="Harris A."/>
            <person name="Isak A."/>
            <person name="van Brunt A."/>
            <person name="Nguyen C."/>
            <person name="Du F."/>
            <person name="Courtney L."/>
            <person name="Kalicki J."/>
            <person name="Ozersky P."/>
            <person name="Abbott S."/>
            <person name="Armstrong J."/>
            <person name="Belter E.A."/>
            <person name="Caruso L."/>
            <person name="Cedroni M."/>
            <person name="Cotton M."/>
            <person name="Davidson T."/>
            <person name="Desai A."/>
            <person name="Elliott G."/>
            <person name="Erb T."/>
            <person name="Fronick C."/>
            <person name="Gaige T."/>
            <person name="Haakenson W."/>
            <person name="Haglund K."/>
            <person name="Holmes A."/>
            <person name="Harkins R."/>
            <person name="Kim K."/>
            <person name="Kruchowski S.S."/>
            <person name="Strong C.M."/>
            <person name="Grewal N."/>
            <person name="Goyea E."/>
            <person name="Hou S."/>
            <person name="Levy A."/>
            <person name="Martinka S."/>
            <person name="Mead K."/>
            <person name="McLellan M.D."/>
            <person name="Meyer R."/>
            <person name="Randall-Maher J."/>
            <person name="Tomlinson C."/>
            <person name="Dauphin-Kohlberg S."/>
            <person name="Kozlowicz-Reilly A."/>
            <person name="Shah N."/>
            <person name="Swearengen-Shahid S."/>
            <person name="Snider J."/>
            <person name="Strong J.T."/>
            <person name="Thompson J."/>
            <person name="Yoakum M."/>
            <person name="Leonard S."/>
            <person name="Pearman C."/>
            <person name="Trani L."/>
            <person name="Radionenko M."/>
            <person name="Waligorski J.E."/>
            <person name="Wang C."/>
            <person name="Rock S.M."/>
            <person name="Tin-Wollam A.-M."/>
            <person name="Maupin R."/>
            <person name="Latreille P."/>
            <person name="Wendl M.C."/>
            <person name="Yang S.-P."/>
            <person name="Pohl C."/>
            <person name="Wallis J.W."/>
            <person name="Spieth J."/>
            <person name="Bieri T.A."/>
            <person name="Berkowicz N."/>
            <person name="Nelson J.O."/>
            <person name="Osborne J."/>
            <person name="Ding L."/>
            <person name="Meyer R."/>
            <person name="Sabo A."/>
            <person name="Shotland Y."/>
            <person name="Sinha P."/>
            <person name="Wohldmann P.E."/>
            <person name="Cook L.L."/>
            <person name="Hickenbotham M.T."/>
            <person name="Eldred J."/>
            <person name="Williams D."/>
            <person name="Jones T.A."/>
            <person name="She X."/>
            <person name="Ciccarelli F.D."/>
            <person name="Izaurralde E."/>
            <person name="Taylor J."/>
            <person name="Schmutz J."/>
            <person name="Myers R.M."/>
            <person name="Cox D.R."/>
            <person name="Huang X."/>
            <person name="McPherson J.D."/>
            <person name="Mardis E.R."/>
            <person name="Clifton S.W."/>
            <person name="Warren W.C."/>
            <person name="Chinwalla A.T."/>
            <person name="Eddy S.R."/>
            <person name="Marra M.A."/>
            <person name="Ovcharenko I."/>
            <person name="Furey T.S."/>
            <person name="Miller W."/>
            <person name="Eichler E.E."/>
            <person name="Bork P."/>
            <person name="Suyama M."/>
            <person name="Torrents D."/>
            <person name="Waterston R.H."/>
            <person name="Wilson R.K."/>
        </authorList>
    </citation>
    <scope>NUCLEOTIDE SEQUENCE [LARGE SCALE GENOMIC DNA]</scope>
</reference>
<reference key="9">
    <citation type="submission" date="2005-07" db="EMBL/GenBank/DDBJ databases">
        <authorList>
            <person name="Mural R.J."/>
            <person name="Istrail S."/>
            <person name="Sutton G.G."/>
            <person name="Florea L."/>
            <person name="Halpern A.L."/>
            <person name="Mobarry C.M."/>
            <person name="Lippert R."/>
            <person name="Walenz B."/>
            <person name="Shatkay H."/>
            <person name="Dew I."/>
            <person name="Miller J.R."/>
            <person name="Flanigan M.J."/>
            <person name="Edwards N.J."/>
            <person name="Bolanos R."/>
            <person name="Fasulo D."/>
            <person name="Halldorsson B.V."/>
            <person name="Hannenhalli S."/>
            <person name="Turner R."/>
            <person name="Yooseph S."/>
            <person name="Lu F."/>
            <person name="Nusskern D.R."/>
            <person name="Shue B.C."/>
            <person name="Zheng X.H."/>
            <person name="Zhong F."/>
            <person name="Delcher A.L."/>
            <person name="Huson D.H."/>
            <person name="Kravitz S.A."/>
            <person name="Mouchard L."/>
            <person name="Reinert K."/>
            <person name="Remington K.A."/>
            <person name="Clark A.G."/>
            <person name="Waterman M.S."/>
            <person name="Eichler E.E."/>
            <person name="Adams M.D."/>
            <person name="Hunkapiller M.W."/>
            <person name="Myers E.W."/>
            <person name="Venter J.C."/>
        </authorList>
    </citation>
    <scope>NUCLEOTIDE SEQUENCE [LARGE SCALE GENOMIC DNA]</scope>
</reference>
<reference key="10">
    <citation type="journal article" date="2004" name="Genome Res.">
        <title>The status, quality, and expansion of the NIH full-length cDNA project: the Mammalian Gene Collection (MGC).</title>
        <authorList>
            <consortium name="The MGC Project Team"/>
        </authorList>
    </citation>
    <scope>NUCLEOTIDE SEQUENCE [LARGE SCALE MRNA]</scope>
    <source>
        <tissue>Brain</tissue>
    </source>
</reference>
<protein>
    <recommendedName>
        <fullName>Neuropeptide Y receptor type 2</fullName>
        <shortName>NPY2-R</shortName>
    </recommendedName>
    <alternativeName>
        <fullName>NPY-Y2 receptor</fullName>
        <shortName>Y2 receptor</shortName>
    </alternativeName>
</protein>
<dbReference type="EMBL" id="U36269">
    <property type="protein sequence ID" value="AAC50281.1"/>
    <property type="molecule type" value="mRNA"/>
</dbReference>
<dbReference type="EMBL" id="U42766">
    <property type="protein sequence ID" value="AAB04120.1"/>
    <property type="molecule type" value="mRNA"/>
</dbReference>
<dbReference type="EMBL" id="U32500">
    <property type="protein sequence ID" value="AAA93170.1"/>
    <property type="molecule type" value="mRNA"/>
</dbReference>
<dbReference type="EMBL" id="U42389">
    <property type="protein sequence ID" value="AAB07760.1"/>
    <property type="molecule type" value="mRNA"/>
</dbReference>
<dbReference type="EMBL" id="U50146">
    <property type="protein sequence ID" value="AAC51115.1"/>
    <property type="molecule type" value="Genomic_DNA"/>
</dbReference>
<dbReference type="EMBL" id="U76254">
    <property type="protein sequence ID" value="AAD00248.1"/>
    <property type="molecule type" value="Genomic_DNA"/>
</dbReference>
<dbReference type="EMBL" id="AY236540">
    <property type="protein sequence ID" value="AAO92062.1"/>
    <property type="molecule type" value="Genomic_DNA"/>
</dbReference>
<dbReference type="EMBL" id="AC104407">
    <property type="protein sequence ID" value="AAY40940.1"/>
    <property type="molecule type" value="Genomic_DNA"/>
</dbReference>
<dbReference type="EMBL" id="CH471056">
    <property type="protein sequence ID" value="EAX04901.1"/>
    <property type="molecule type" value="Genomic_DNA"/>
</dbReference>
<dbReference type="EMBL" id="BC075053">
    <property type="protein sequence ID" value="AAH75053.2"/>
    <property type="molecule type" value="mRNA"/>
</dbReference>
<dbReference type="EMBL" id="BC075052">
    <property type="protein sequence ID" value="AAH75052.2"/>
    <property type="molecule type" value="mRNA"/>
</dbReference>
<dbReference type="CCDS" id="CCDS3791.1"/>
<dbReference type="PIR" id="I39187">
    <property type="entry name" value="I39187"/>
</dbReference>
<dbReference type="RefSeq" id="NP_000901.1">
    <property type="nucleotide sequence ID" value="NM_000910.4"/>
</dbReference>
<dbReference type="RefSeq" id="NP_001357109.1">
    <property type="nucleotide sequence ID" value="NM_001370180.1"/>
</dbReference>
<dbReference type="RefSeq" id="NP_001362399.1">
    <property type="nucleotide sequence ID" value="NM_001375470.1"/>
</dbReference>
<dbReference type="RefSeq" id="XP_005263090.1">
    <property type="nucleotide sequence ID" value="XM_005263033.4"/>
</dbReference>
<dbReference type="RefSeq" id="XP_005263091.1">
    <property type="nucleotide sequence ID" value="XM_005263034.4"/>
</dbReference>
<dbReference type="PDB" id="7X9B">
    <property type="method" value="EM"/>
    <property type="resolution" value="3.40 A"/>
    <property type="chains" value="R=1-353"/>
</dbReference>
<dbReference type="PDB" id="7YON">
    <property type="method" value="EM"/>
    <property type="resolution" value="2.95 A"/>
    <property type="chains" value="R=2-381"/>
</dbReference>
<dbReference type="PDB" id="7YOO">
    <property type="method" value="EM"/>
    <property type="resolution" value="3.11 A"/>
    <property type="chains" value="R=2-381"/>
</dbReference>
<dbReference type="PDB" id="8K6N">
    <property type="method" value="EM"/>
    <property type="resolution" value="3.20 A"/>
    <property type="chains" value="E=1-341"/>
</dbReference>
<dbReference type="PDBsum" id="7X9B"/>
<dbReference type="PDBsum" id="7YON"/>
<dbReference type="PDBsum" id="7YOO"/>
<dbReference type="PDBsum" id="8K6N"/>
<dbReference type="BMRB" id="P49146"/>
<dbReference type="EMDB" id="EMD-33070"/>
<dbReference type="EMDB" id="EMD-33984"/>
<dbReference type="EMDB" id="EMD-33985"/>
<dbReference type="EMDB" id="EMD-36924"/>
<dbReference type="SMR" id="P49146"/>
<dbReference type="BioGRID" id="110947">
    <property type="interactions" value="76"/>
</dbReference>
<dbReference type="CORUM" id="P49146"/>
<dbReference type="FunCoup" id="P49146">
    <property type="interactions" value="798"/>
</dbReference>
<dbReference type="IntAct" id="P49146">
    <property type="interactions" value="64"/>
</dbReference>
<dbReference type="STRING" id="9606.ENSP00000332591"/>
<dbReference type="BindingDB" id="P49146"/>
<dbReference type="ChEMBL" id="CHEMBL4018"/>
<dbReference type="DrugBank" id="DB00847">
    <property type="generic name" value="Cysteamine"/>
</dbReference>
<dbReference type="DrugBank" id="DB05045">
    <property type="generic name" value="Obinepitide"/>
</dbReference>
<dbReference type="DrugBank" id="DB05004">
    <property type="generic name" value="Peptide YY (3-36)"/>
</dbReference>
<dbReference type="DrugCentral" id="P49146"/>
<dbReference type="GuidetoPHARMACOLOGY" id="306"/>
<dbReference type="TCDB" id="9.A.14.13.33">
    <property type="family name" value="the g-protein-coupled receptor (gpcr) family"/>
</dbReference>
<dbReference type="GlyCosmos" id="P49146">
    <property type="glycosylation" value="1 site, No reported glycans"/>
</dbReference>
<dbReference type="GlyGen" id="P49146">
    <property type="glycosylation" value="1 site"/>
</dbReference>
<dbReference type="iPTMnet" id="P49146"/>
<dbReference type="PhosphoSitePlus" id="P49146"/>
<dbReference type="BioMuta" id="NPY2R"/>
<dbReference type="DMDM" id="1352610"/>
<dbReference type="jPOST" id="P49146"/>
<dbReference type="MassIVE" id="P49146"/>
<dbReference type="PaxDb" id="9606-ENSP00000332591"/>
<dbReference type="PeptideAtlas" id="P49146"/>
<dbReference type="ProteomicsDB" id="55966"/>
<dbReference type="Antibodypedia" id="2964">
    <property type="antibodies" value="329 antibodies from 38 providers"/>
</dbReference>
<dbReference type="DNASU" id="4887"/>
<dbReference type="Ensembl" id="ENST00000329476.4">
    <property type="protein sequence ID" value="ENSP00000332591.3"/>
    <property type="gene ID" value="ENSG00000185149.6"/>
</dbReference>
<dbReference type="Ensembl" id="ENST00000506608.1">
    <property type="protein sequence ID" value="ENSP00000426366.1"/>
    <property type="gene ID" value="ENSG00000185149.6"/>
</dbReference>
<dbReference type="GeneID" id="4887"/>
<dbReference type="KEGG" id="hsa:4887"/>
<dbReference type="MANE-Select" id="ENST00000329476.4">
    <property type="protein sequence ID" value="ENSP00000332591.3"/>
    <property type="RefSeq nucleotide sequence ID" value="NM_000910.4"/>
    <property type="RefSeq protein sequence ID" value="NP_000901.1"/>
</dbReference>
<dbReference type="UCSC" id="uc003ioq.3">
    <property type="organism name" value="human"/>
</dbReference>
<dbReference type="AGR" id="HGNC:7957"/>
<dbReference type="CTD" id="4887"/>
<dbReference type="DisGeNET" id="4887"/>
<dbReference type="GeneCards" id="NPY2R"/>
<dbReference type="HGNC" id="HGNC:7957">
    <property type="gene designation" value="NPY2R"/>
</dbReference>
<dbReference type="HPA" id="ENSG00000185149">
    <property type="expression patterns" value="Tissue enhanced (brain, breast)"/>
</dbReference>
<dbReference type="MIM" id="162642">
    <property type="type" value="gene"/>
</dbReference>
<dbReference type="neXtProt" id="NX_P49146"/>
<dbReference type="OpenTargets" id="ENSG00000185149"/>
<dbReference type="PharmGKB" id="PA31741"/>
<dbReference type="VEuPathDB" id="HostDB:ENSG00000185149"/>
<dbReference type="eggNOG" id="KOG3656">
    <property type="taxonomic scope" value="Eukaryota"/>
</dbReference>
<dbReference type="GeneTree" id="ENSGT00940000155973"/>
<dbReference type="HOGENOM" id="CLU_009579_6_1_1"/>
<dbReference type="InParanoid" id="P49146"/>
<dbReference type="OMA" id="WPGKNTD"/>
<dbReference type="OrthoDB" id="9046662at2759"/>
<dbReference type="PAN-GO" id="P49146">
    <property type="GO annotations" value="5 GO annotations based on evolutionary models"/>
</dbReference>
<dbReference type="PhylomeDB" id="P49146"/>
<dbReference type="TreeFam" id="TF315303"/>
<dbReference type="PathwayCommons" id="P49146"/>
<dbReference type="Reactome" id="R-HSA-375276">
    <property type="pathway name" value="Peptide ligand-binding receptors"/>
</dbReference>
<dbReference type="Reactome" id="R-HSA-418594">
    <property type="pathway name" value="G alpha (i) signalling events"/>
</dbReference>
<dbReference type="SignaLink" id="P49146"/>
<dbReference type="SIGNOR" id="P49146"/>
<dbReference type="BioGRID-ORCS" id="4887">
    <property type="hits" value="8 hits in 1149 CRISPR screens"/>
</dbReference>
<dbReference type="ChiTaRS" id="NPY2R">
    <property type="organism name" value="human"/>
</dbReference>
<dbReference type="GeneWiki" id="Neuropeptide_Y_receptor_Y2"/>
<dbReference type="GenomeRNAi" id="4887"/>
<dbReference type="Pharos" id="P49146">
    <property type="development level" value="Tchem"/>
</dbReference>
<dbReference type="PRO" id="PR:P49146"/>
<dbReference type="Proteomes" id="UP000005640">
    <property type="component" value="Chromosome 4"/>
</dbReference>
<dbReference type="RNAct" id="P49146">
    <property type="molecule type" value="protein"/>
</dbReference>
<dbReference type="Bgee" id="ENSG00000185149">
    <property type="expression patterns" value="Expressed in male germ line stem cell (sensu Vertebrata) in testis and 83 other cell types or tissues"/>
</dbReference>
<dbReference type="GO" id="GO:0005929">
    <property type="term" value="C:cilium"/>
    <property type="evidence" value="ECO:0000314"/>
    <property type="project" value="MGI"/>
</dbReference>
<dbReference type="GO" id="GO:0098978">
    <property type="term" value="C:glutamatergic synapse"/>
    <property type="evidence" value="ECO:0007669"/>
    <property type="project" value="Ensembl"/>
</dbReference>
<dbReference type="GO" id="GO:0097730">
    <property type="term" value="C:non-motile cilium"/>
    <property type="evidence" value="ECO:0007669"/>
    <property type="project" value="Ensembl"/>
</dbReference>
<dbReference type="GO" id="GO:0005886">
    <property type="term" value="C:plasma membrane"/>
    <property type="evidence" value="ECO:0000304"/>
    <property type="project" value="Reactome"/>
</dbReference>
<dbReference type="GO" id="GO:0098793">
    <property type="term" value="C:presynapse"/>
    <property type="evidence" value="ECO:0007669"/>
    <property type="project" value="Ensembl"/>
</dbReference>
<dbReference type="GO" id="GO:0005246">
    <property type="term" value="F:calcium channel regulator activity"/>
    <property type="evidence" value="ECO:0000304"/>
    <property type="project" value="ProtInc"/>
</dbReference>
<dbReference type="GO" id="GO:0004983">
    <property type="term" value="F:neuropeptide Y receptor activity"/>
    <property type="evidence" value="ECO:0000304"/>
    <property type="project" value="ProtInc"/>
</dbReference>
<dbReference type="GO" id="GO:0001601">
    <property type="term" value="F:peptide YY receptor activity"/>
    <property type="evidence" value="ECO:0007669"/>
    <property type="project" value="Ensembl"/>
</dbReference>
<dbReference type="GO" id="GO:0038023">
    <property type="term" value="F:signaling receptor activity"/>
    <property type="evidence" value="ECO:0000304"/>
    <property type="project" value="ProtInc"/>
</dbReference>
<dbReference type="GO" id="GO:0007193">
    <property type="term" value="P:adenylate cyclase-inhibiting G protein-coupled receptor signaling pathway"/>
    <property type="evidence" value="ECO:0000304"/>
    <property type="project" value="ProtInc"/>
</dbReference>
<dbReference type="GO" id="GO:0001662">
    <property type="term" value="P:behavioral fear response"/>
    <property type="evidence" value="ECO:0007669"/>
    <property type="project" value="Ensembl"/>
</dbReference>
<dbReference type="GO" id="GO:0003214">
    <property type="term" value="P:cardiac left ventricle morphogenesis"/>
    <property type="evidence" value="ECO:0000315"/>
    <property type="project" value="BHF-UCL"/>
</dbReference>
<dbReference type="GO" id="GO:0007626">
    <property type="term" value="P:locomotory behavior"/>
    <property type="evidence" value="ECO:0000304"/>
    <property type="project" value="ProtInc"/>
</dbReference>
<dbReference type="GO" id="GO:0141162">
    <property type="term" value="P:negative regulation of cAMP/PKA signal transduction"/>
    <property type="evidence" value="ECO:0007669"/>
    <property type="project" value="Ensembl"/>
</dbReference>
<dbReference type="GO" id="GO:0090394">
    <property type="term" value="P:negative regulation of excitatory postsynaptic potential"/>
    <property type="evidence" value="ECO:0007669"/>
    <property type="project" value="Ensembl"/>
</dbReference>
<dbReference type="GO" id="GO:2000252">
    <property type="term" value="P:negative regulation of feeding behavior"/>
    <property type="evidence" value="ECO:0007669"/>
    <property type="project" value="Ensembl"/>
</dbReference>
<dbReference type="GO" id="GO:0031645">
    <property type="term" value="P:negative regulation of nervous system process"/>
    <property type="evidence" value="ECO:0007669"/>
    <property type="project" value="Ensembl"/>
</dbReference>
<dbReference type="GO" id="GO:0051048">
    <property type="term" value="P:negative regulation of secretion"/>
    <property type="evidence" value="ECO:0007669"/>
    <property type="project" value="Ensembl"/>
</dbReference>
<dbReference type="GO" id="GO:0051967">
    <property type="term" value="P:negative regulation of synaptic transmission, glutamatergic"/>
    <property type="evidence" value="ECO:0007669"/>
    <property type="project" value="Ensembl"/>
</dbReference>
<dbReference type="GO" id="GO:0007263">
    <property type="term" value="P:nitric oxide mediated signal transduction"/>
    <property type="evidence" value="ECO:0007669"/>
    <property type="project" value="Ensembl"/>
</dbReference>
<dbReference type="GO" id="GO:0003151">
    <property type="term" value="P:outflow tract morphogenesis"/>
    <property type="evidence" value="ECO:0000315"/>
    <property type="project" value="BHF-UCL"/>
</dbReference>
<dbReference type="GO" id="GO:0010811">
    <property type="term" value="P:positive regulation of cell-substrate adhesion"/>
    <property type="evidence" value="ECO:0007669"/>
    <property type="project" value="Ensembl"/>
</dbReference>
<dbReference type="GO" id="GO:0046010">
    <property type="term" value="P:positive regulation of circadian sleep/wake cycle, non-REM sleep"/>
    <property type="evidence" value="ECO:0007669"/>
    <property type="project" value="Ensembl"/>
</dbReference>
<dbReference type="GO" id="GO:0007204">
    <property type="term" value="P:positive regulation of cytosolic calcium ion concentration"/>
    <property type="evidence" value="ECO:0007669"/>
    <property type="project" value="Ensembl"/>
</dbReference>
<dbReference type="GO" id="GO:0033603">
    <property type="term" value="P:positive regulation of dopamine secretion"/>
    <property type="evidence" value="ECO:0007669"/>
    <property type="project" value="Ensembl"/>
</dbReference>
<dbReference type="GO" id="GO:0002793">
    <property type="term" value="P:positive regulation of peptide secretion"/>
    <property type="evidence" value="ECO:0007669"/>
    <property type="project" value="Ensembl"/>
</dbReference>
<dbReference type="GO" id="GO:0045987">
    <property type="term" value="P:positive regulation of smooth muscle contraction"/>
    <property type="evidence" value="ECO:0007669"/>
    <property type="project" value="Ensembl"/>
</dbReference>
<dbReference type="GO" id="GO:0099538">
    <property type="term" value="P:synaptic signaling via neuropeptide"/>
    <property type="evidence" value="ECO:0007669"/>
    <property type="project" value="Ensembl"/>
</dbReference>
<dbReference type="CDD" id="cd15399">
    <property type="entry name" value="7tmA_NPY2R"/>
    <property type="match status" value="1"/>
</dbReference>
<dbReference type="FunFam" id="1.20.1070.10:FF:000158">
    <property type="entry name" value="Neuropeptide Y receptor type 2"/>
    <property type="match status" value="1"/>
</dbReference>
<dbReference type="Gene3D" id="1.20.1070.10">
    <property type="entry name" value="Rhodopsin 7-helix transmembrane proteins"/>
    <property type="match status" value="1"/>
</dbReference>
<dbReference type="InterPro" id="IPR000276">
    <property type="entry name" value="GPCR_Rhodpsn"/>
</dbReference>
<dbReference type="InterPro" id="IPR017452">
    <property type="entry name" value="GPCR_Rhodpsn_7TM"/>
</dbReference>
<dbReference type="InterPro" id="IPR001358">
    <property type="entry name" value="NPY2_rcpt"/>
</dbReference>
<dbReference type="InterPro" id="IPR000611">
    <property type="entry name" value="NPY_rcpt"/>
</dbReference>
<dbReference type="PANTHER" id="PTHR24235">
    <property type="entry name" value="NEUROPEPTIDE Y RECEPTOR"/>
    <property type="match status" value="1"/>
</dbReference>
<dbReference type="PANTHER" id="PTHR24235:SF20">
    <property type="entry name" value="NEUROPEPTIDE Y RECEPTOR TYPE 2"/>
    <property type="match status" value="1"/>
</dbReference>
<dbReference type="Pfam" id="PF00001">
    <property type="entry name" value="7tm_1"/>
    <property type="match status" value="1"/>
</dbReference>
<dbReference type="PRINTS" id="PR00237">
    <property type="entry name" value="GPCRRHODOPSN"/>
</dbReference>
<dbReference type="PRINTS" id="PR01014">
    <property type="entry name" value="NRPEPTIDEY2R"/>
</dbReference>
<dbReference type="PRINTS" id="PR01012">
    <property type="entry name" value="NRPEPTIDEYR"/>
</dbReference>
<dbReference type="SMART" id="SM01381">
    <property type="entry name" value="7TM_GPCR_Srsx"/>
    <property type="match status" value="1"/>
</dbReference>
<dbReference type="SUPFAM" id="SSF81321">
    <property type="entry name" value="Family A G protein-coupled receptor-like"/>
    <property type="match status" value="1"/>
</dbReference>
<dbReference type="PROSITE" id="PS00237">
    <property type="entry name" value="G_PROTEIN_RECEP_F1_1"/>
    <property type="match status" value="1"/>
</dbReference>
<dbReference type="PROSITE" id="PS50262">
    <property type="entry name" value="G_PROTEIN_RECEP_F1_2"/>
    <property type="match status" value="1"/>
</dbReference>
<sequence>MGPIGAEADENQTVEEMKVEQYGPQTTPRGELVPDPEPELIDSTKLIEVQVVLILAYCSIILLGVIGNSLVIHVVIKFKSMRTVTNFFIANLAVADLLVNTLCLPFTLTYTLMGEWKMGPVLCHLVPYAQGLAVQVSTITLTVIALDRHRCIVYHLESKISKRISFLIIGLAWGISALLASPLAIFREYSLIEIIPDFEIVACTEKWPGEEKSIYGTVYSLSSLLILYVLPLGIISFSYTRIWSKLKNHVSPGAANDHYHQRRQKTTKMLVCVVVVFAVSWLPLHAFQLAVDIDSQVLDLKEYKLIFTVFHIIAMCSTFANPLLYGWMNSNYRKAFLSAFRCEQRLDAIHSEVSVTFKAKKNLEVRKNSGPNDSFTEATNV</sequence>
<evidence type="ECO:0000255" key="1"/>
<evidence type="ECO:0000255" key="2">
    <source>
        <dbReference type="PROSITE-ProRule" id="PRU00521"/>
    </source>
</evidence>
<evidence type="ECO:0000256" key="3">
    <source>
        <dbReference type="SAM" id="MobiDB-lite"/>
    </source>
</evidence>
<evidence type="ECO:0000305" key="4"/>
<evidence type="ECO:0007829" key="5">
    <source>
        <dbReference type="PDB" id="7X9B"/>
    </source>
</evidence>
<evidence type="ECO:0007829" key="6">
    <source>
        <dbReference type="PDB" id="8K6N"/>
    </source>
</evidence>
<organism>
    <name type="scientific">Homo sapiens</name>
    <name type="common">Human</name>
    <dbReference type="NCBI Taxonomy" id="9606"/>
    <lineage>
        <taxon>Eukaryota</taxon>
        <taxon>Metazoa</taxon>
        <taxon>Chordata</taxon>
        <taxon>Craniata</taxon>
        <taxon>Vertebrata</taxon>
        <taxon>Euteleostomi</taxon>
        <taxon>Mammalia</taxon>
        <taxon>Eutheria</taxon>
        <taxon>Euarchontoglires</taxon>
        <taxon>Primates</taxon>
        <taxon>Haplorrhini</taxon>
        <taxon>Catarrhini</taxon>
        <taxon>Hominidae</taxon>
        <taxon>Homo</taxon>
    </lineage>
</organism>
<feature type="chain" id="PRO_0000069928" description="Neuropeptide Y receptor type 2">
    <location>
        <begin position="1"/>
        <end position="381"/>
    </location>
</feature>
<feature type="topological domain" description="Extracellular" evidence="1">
    <location>
        <begin position="1"/>
        <end position="51"/>
    </location>
</feature>
<feature type="transmembrane region" description="Helical; Name=1" evidence="1">
    <location>
        <begin position="52"/>
        <end position="72"/>
    </location>
</feature>
<feature type="topological domain" description="Cytoplasmic" evidence="1">
    <location>
        <begin position="73"/>
        <end position="86"/>
    </location>
</feature>
<feature type="transmembrane region" description="Helical; Name=2" evidence="1">
    <location>
        <begin position="87"/>
        <end position="107"/>
    </location>
</feature>
<feature type="topological domain" description="Extracellular" evidence="1">
    <location>
        <begin position="108"/>
        <end position="124"/>
    </location>
</feature>
<feature type="transmembrane region" description="Helical; Name=3" evidence="1">
    <location>
        <begin position="125"/>
        <end position="145"/>
    </location>
</feature>
<feature type="topological domain" description="Cytoplasmic" evidence="1">
    <location>
        <begin position="146"/>
        <end position="165"/>
    </location>
</feature>
<feature type="transmembrane region" description="Helical; Name=4" evidence="1">
    <location>
        <begin position="166"/>
        <end position="186"/>
    </location>
</feature>
<feature type="topological domain" description="Extracellular" evidence="1">
    <location>
        <begin position="187"/>
        <end position="216"/>
    </location>
</feature>
<feature type="transmembrane region" description="Helical; Name=5" evidence="1">
    <location>
        <begin position="217"/>
        <end position="237"/>
    </location>
</feature>
<feature type="topological domain" description="Cytoplasmic" evidence="1">
    <location>
        <begin position="238"/>
        <end position="268"/>
    </location>
</feature>
<feature type="transmembrane region" description="Helical; Name=6" evidence="1">
    <location>
        <begin position="269"/>
        <end position="289"/>
    </location>
</feature>
<feature type="topological domain" description="Extracellular" evidence="1">
    <location>
        <begin position="290"/>
        <end position="304"/>
    </location>
</feature>
<feature type="transmembrane region" description="Helical; Name=7" evidence="1">
    <location>
        <begin position="305"/>
        <end position="325"/>
    </location>
</feature>
<feature type="topological domain" description="Cytoplasmic" evidence="1">
    <location>
        <begin position="326"/>
        <end position="381"/>
    </location>
</feature>
<feature type="region of interest" description="Disordered" evidence="3">
    <location>
        <begin position="1"/>
        <end position="35"/>
    </location>
</feature>
<feature type="lipid moiety-binding region" description="S-palmitoyl cysteine" evidence="1">
    <location>
        <position position="342"/>
    </location>
</feature>
<feature type="glycosylation site" description="N-linked (GlcNAc...) asparagine" evidence="1">
    <location>
        <position position="11"/>
    </location>
</feature>
<feature type="disulfide bond" evidence="2">
    <location>
        <begin position="123"/>
        <end position="203"/>
    </location>
</feature>
<feature type="sequence conflict" description="In Ref. 3; AAA93170." evidence="4" ref="3">
    <original>V</original>
    <variation>A</variation>
    <location>
        <position position="134"/>
    </location>
</feature>
<feature type="sequence conflict" description="In Ref. 4." evidence="4" ref="4">
    <original>A</original>
    <variation>G</variation>
    <location>
        <position position="172"/>
    </location>
</feature>
<feature type="sequence conflict" description="In Ref. 4." evidence="4" ref="4">
    <original>G</original>
    <variation>R</variation>
    <location>
        <position position="174"/>
    </location>
</feature>
<feature type="sequence conflict" description="In Ref. 4; AAB07760." evidence="4" ref="4">
    <original>A</original>
    <variation>P</variation>
    <location>
        <position position="202"/>
    </location>
</feature>
<feature type="sequence conflict" description="In Ref. 4; AAB07760." evidence="4" ref="4">
    <original>G</original>
    <variation>A</variation>
    <location>
        <position position="209"/>
    </location>
</feature>
<feature type="sequence conflict" description="In Ref. 6; AAD00248." evidence="4" ref="6">
    <original>N</original>
    <variation>S</variation>
    <location>
        <position position="248"/>
    </location>
</feature>
<feature type="sequence conflict" description="In Ref. 6; AAD00248." evidence="4" ref="6">
    <original>H</original>
    <variation>Y</variation>
    <location>
        <position position="311"/>
    </location>
</feature>
<feature type="helix" evidence="6">
    <location>
        <begin position="47"/>
        <end position="77"/>
    </location>
</feature>
<feature type="helix" evidence="6">
    <location>
        <begin position="84"/>
        <end position="113"/>
    </location>
</feature>
<feature type="helix" evidence="6">
    <location>
        <begin position="120"/>
        <end position="152"/>
    </location>
</feature>
<feature type="helix" evidence="6">
    <location>
        <begin position="162"/>
        <end position="179"/>
    </location>
</feature>
<feature type="helix" evidence="6">
    <location>
        <begin position="181"/>
        <end position="185"/>
    </location>
</feature>
<feature type="strand" evidence="6">
    <location>
        <begin position="188"/>
        <end position="194"/>
    </location>
</feature>
<feature type="turn" evidence="6">
    <location>
        <begin position="195"/>
        <end position="197"/>
    </location>
</feature>
<feature type="strand" evidence="6">
    <location>
        <begin position="198"/>
        <end position="204"/>
    </location>
</feature>
<feature type="strand" evidence="6">
    <location>
        <begin position="208"/>
        <end position="211"/>
    </location>
</feature>
<feature type="helix" evidence="6">
    <location>
        <begin position="214"/>
        <end position="227"/>
    </location>
</feature>
<feature type="helix" evidence="6">
    <location>
        <begin position="229"/>
        <end position="247"/>
    </location>
</feature>
<feature type="strand" evidence="6">
    <location>
        <begin position="252"/>
        <end position="254"/>
    </location>
</feature>
<feature type="helix" evidence="6">
    <location>
        <begin position="257"/>
        <end position="280"/>
    </location>
</feature>
<feature type="helix" evidence="6">
    <location>
        <begin position="282"/>
        <end position="291"/>
    </location>
</feature>
<feature type="strand" evidence="5">
    <location>
        <begin position="294"/>
        <end position="298"/>
    </location>
</feature>
<feature type="helix" evidence="6">
    <location>
        <begin position="303"/>
        <end position="315"/>
    </location>
</feature>
<feature type="helix" evidence="6">
    <location>
        <begin position="317"/>
        <end position="326"/>
    </location>
</feature>
<feature type="helix" evidence="6">
    <location>
        <begin position="330"/>
        <end position="338"/>
    </location>
</feature>
<comment type="function">
    <text>Receptor for neuropeptide Y and peptide YY. The rank order of affinity of this receptor for pancreatic polypeptides is PYY &gt; NPY &gt; PYY (3-36) &gt; NPY (2-36) &gt; [Ile-31, Gln-34] PP &gt; [Leu-31, Pro-34] NPY &gt; PP, [Pro-34] PYY and NPY free acid.</text>
</comment>
<comment type="interaction">
    <interactant intactId="EBI-6655721">
        <id>P49146</id>
    </interactant>
    <interactant intactId="EBI-6655667">
        <id>P10082</id>
        <label>PYY</label>
    </interactant>
    <organismsDiffer>false</organismsDiffer>
    <experiments>2</experiments>
</comment>
<comment type="interaction">
    <interactant intactId="EBI-6655721">
        <id>P49146</id>
    </interactant>
    <interactant intactId="EBI-11988865">
        <id>A5PKU2</id>
        <label>TUSC5</label>
    </interactant>
    <organismsDiffer>false</organismsDiffer>
    <experiments>3</experiments>
</comment>
<comment type="subcellular location">
    <subcellularLocation>
        <location>Cell membrane</location>
        <topology>Multi-pass membrane protein</topology>
    </subcellularLocation>
</comment>
<comment type="tissue specificity">
    <text>High levels in amygdala, corpus callosum, hippocampus and subthalamic nucleus. Also detectable in caudate nucleus, hypothalamus and substantia nigra.</text>
</comment>
<comment type="similarity">
    <text evidence="2">Belongs to the G-protein coupled receptor 1 family.</text>
</comment>
<gene>
    <name type="primary">NPY2R</name>
</gene>
<keyword id="KW-0002">3D-structure</keyword>
<keyword id="KW-1003">Cell membrane</keyword>
<keyword id="KW-1015">Disulfide bond</keyword>
<keyword id="KW-0297">G-protein coupled receptor</keyword>
<keyword id="KW-0325">Glycoprotein</keyword>
<keyword id="KW-0449">Lipoprotein</keyword>
<keyword id="KW-0472">Membrane</keyword>
<keyword id="KW-0564">Palmitate</keyword>
<keyword id="KW-1267">Proteomics identification</keyword>
<keyword id="KW-0675">Receptor</keyword>
<keyword id="KW-1185">Reference proteome</keyword>
<keyword id="KW-0807">Transducer</keyword>
<keyword id="KW-0812">Transmembrane</keyword>
<keyword id="KW-1133">Transmembrane helix</keyword>
<accession>P49146</accession>
<accession>Q13281</accession>
<accession>Q13457</accession>
<accession>Q4W5G7</accession>
<accession>Q6AZZ6</accession>
<accession>Q9UE67</accession>